<organism>
    <name type="scientific">Staphylococcus epidermidis (strain ATCC 35984 / DSM 28319 / BCRC 17069 / CCUG 31568 / BM 3577 / RP62A)</name>
    <dbReference type="NCBI Taxonomy" id="176279"/>
    <lineage>
        <taxon>Bacteria</taxon>
        <taxon>Bacillati</taxon>
        <taxon>Bacillota</taxon>
        <taxon>Bacilli</taxon>
        <taxon>Bacillales</taxon>
        <taxon>Staphylococcaceae</taxon>
        <taxon>Staphylococcus</taxon>
    </lineage>
</organism>
<name>Y1075_STAEQ</name>
<evidence type="ECO:0000305" key="1"/>
<gene>
    <name type="ordered locus">SERP1075</name>
</gene>
<comment type="similarity">
    <text evidence="1">Belongs to the bacilliredoxin family.</text>
</comment>
<protein>
    <recommendedName>
        <fullName evidence="1">Bacilliredoxin SERP1075</fullName>
    </recommendedName>
</protein>
<sequence length="145" mass="16274">MDLNFDLYMNDVVEQARNEIEHAGYHQLTSAEDVDQVLQQKGTSLVMVNSVCGCAGGIARPAAAHALHYDKLPQRLVTVFAGQDKEATQQAREYFEGYAPSSPSFALIKDGKITEMIERHQIEGHDVMDVINQLQALFDKYCEER</sequence>
<accession>Q5HP38</accession>
<keyword id="KW-1185">Reference proteome</keyword>
<dbReference type="EMBL" id="CP000029">
    <property type="protein sequence ID" value="AAW54441.1"/>
    <property type="molecule type" value="Genomic_DNA"/>
</dbReference>
<dbReference type="SMR" id="Q5HP38"/>
<dbReference type="STRING" id="176279.SERP1075"/>
<dbReference type="KEGG" id="ser:SERP1075"/>
<dbReference type="eggNOG" id="ENOG502ZBVN">
    <property type="taxonomic scope" value="Bacteria"/>
</dbReference>
<dbReference type="HOGENOM" id="CLU_132521_0_0_9"/>
<dbReference type="Proteomes" id="UP000000531">
    <property type="component" value="Chromosome"/>
</dbReference>
<dbReference type="GO" id="GO:0045454">
    <property type="term" value="P:cell redox homeostasis"/>
    <property type="evidence" value="ECO:0000250"/>
    <property type="project" value="UniProtKB"/>
</dbReference>
<dbReference type="Gene3D" id="3.40.30.10">
    <property type="entry name" value="Glutaredoxin"/>
    <property type="match status" value="1"/>
</dbReference>
<dbReference type="InterPro" id="IPR009474">
    <property type="entry name" value="BrxB/BrxA"/>
</dbReference>
<dbReference type="NCBIfam" id="TIGR04191">
    <property type="entry name" value="YphP_YqiW"/>
    <property type="match status" value="1"/>
</dbReference>
<dbReference type="PANTHER" id="PTHR40052:SF1">
    <property type="entry name" value="BACILLIREDOXIN BRXB"/>
    <property type="match status" value="1"/>
</dbReference>
<dbReference type="PANTHER" id="PTHR40052">
    <property type="entry name" value="UPF0403 PROTEIN YQIW-RELATED"/>
    <property type="match status" value="1"/>
</dbReference>
<dbReference type="Pfam" id="PF06491">
    <property type="entry name" value="Disulph_isomer"/>
    <property type="match status" value="1"/>
</dbReference>
<proteinExistence type="inferred from homology"/>
<reference key="1">
    <citation type="journal article" date="2005" name="J. Bacteriol.">
        <title>Insights on evolution of virulence and resistance from the complete genome analysis of an early methicillin-resistant Staphylococcus aureus strain and a biofilm-producing methicillin-resistant Staphylococcus epidermidis strain.</title>
        <authorList>
            <person name="Gill S.R."/>
            <person name="Fouts D.E."/>
            <person name="Archer G.L."/>
            <person name="Mongodin E.F."/>
            <person name="DeBoy R.T."/>
            <person name="Ravel J."/>
            <person name="Paulsen I.T."/>
            <person name="Kolonay J.F."/>
            <person name="Brinkac L.M."/>
            <person name="Beanan M.J."/>
            <person name="Dodson R.J."/>
            <person name="Daugherty S.C."/>
            <person name="Madupu R."/>
            <person name="Angiuoli S.V."/>
            <person name="Durkin A.S."/>
            <person name="Haft D.H."/>
            <person name="Vamathevan J.J."/>
            <person name="Khouri H."/>
            <person name="Utterback T.R."/>
            <person name="Lee C."/>
            <person name="Dimitrov G."/>
            <person name="Jiang L."/>
            <person name="Qin H."/>
            <person name="Weidman J."/>
            <person name="Tran K."/>
            <person name="Kang K.H."/>
            <person name="Hance I.R."/>
            <person name="Nelson K.E."/>
            <person name="Fraser C.M."/>
        </authorList>
    </citation>
    <scope>NUCLEOTIDE SEQUENCE [LARGE SCALE GENOMIC DNA]</scope>
    <source>
        <strain>ATCC 35984 / DSM 28319 / BCRC 17069 / CCUG 31568 / BM 3577 / RP62A</strain>
    </source>
</reference>
<feature type="chain" id="PRO_0000272016" description="Bacilliredoxin SERP1075">
    <location>
        <begin position="1"/>
        <end position="145"/>
    </location>
</feature>